<protein>
    <recommendedName>
        <fullName evidence="1">Acetyl-coenzyme A carboxylase carboxyl transferase subunit beta</fullName>
        <shortName evidence="1">ACCase subunit beta</shortName>
        <shortName evidence="1">Acetyl-CoA carboxylase carboxyltransferase subunit beta</shortName>
        <ecNumber evidence="1">2.1.3.15</ecNumber>
    </recommendedName>
</protein>
<sequence>MNWITNYVRPKINSILGRREIPENLWIKDPTSGEMVFHKDLEVNQYVIPSSGYHMRISAKNRLTHFFDDGVYTPLENPKVVIDPLKFRDEKRYIDRLKDYRSKLGIDDNILSARGTIEGLPIIATVQDFAFMGGSLGMASGEAIIKAFDTAIAEKCPLVLFSASGGARMQEGTLSLMQMPRTTVAIEMLKEAKLPYIVVLTNPTTGGVTASYAMLGDIHIAEPGAMIGFAGPRVIQQTIRETLPEGFQSSEYLLKHGMIDMVVSRLEMKTTIARLLRLMMKYPPVVNPSNTSSTNSQASLSKAEAA</sequence>
<name>ACCD_BARHE</name>
<evidence type="ECO:0000255" key="1">
    <source>
        <dbReference type="HAMAP-Rule" id="MF_01395"/>
    </source>
</evidence>
<evidence type="ECO:0000255" key="2">
    <source>
        <dbReference type="PROSITE-ProRule" id="PRU01136"/>
    </source>
</evidence>
<evidence type="ECO:0000256" key="3">
    <source>
        <dbReference type="SAM" id="MobiDB-lite"/>
    </source>
</evidence>
<comment type="function">
    <text evidence="1">Component of the acetyl coenzyme A carboxylase (ACC) complex. Biotin carboxylase (BC) catalyzes the carboxylation of biotin on its carrier protein (BCCP) and then the CO(2) group is transferred by the transcarboxylase to acetyl-CoA to form malonyl-CoA.</text>
</comment>
<comment type="catalytic activity">
    <reaction evidence="1">
        <text>N(6)-carboxybiotinyl-L-lysyl-[protein] + acetyl-CoA = N(6)-biotinyl-L-lysyl-[protein] + malonyl-CoA</text>
        <dbReference type="Rhea" id="RHEA:54728"/>
        <dbReference type="Rhea" id="RHEA-COMP:10505"/>
        <dbReference type="Rhea" id="RHEA-COMP:10506"/>
        <dbReference type="ChEBI" id="CHEBI:57288"/>
        <dbReference type="ChEBI" id="CHEBI:57384"/>
        <dbReference type="ChEBI" id="CHEBI:83144"/>
        <dbReference type="ChEBI" id="CHEBI:83145"/>
        <dbReference type="EC" id="2.1.3.15"/>
    </reaction>
</comment>
<comment type="pathway">
    <text evidence="1">Lipid metabolism; malonyl-CoA biosynthesis; malonyl-CoA from acetyl-CoA: step 1/1.</text>
</comment>
<comment type="subunit">
    <text evidence="1">Acetyl-CoA carboxylase is a heterohexamer composed of biotin carboxyl carrier protein (AccB), biotin carboxylase (AccC) and two subunits each of ACCase subunit alpha (AccA) and ACCase subunit beta (AccD).</text>
</comment>
<comment type="subcellular location">
    <subcellularLocation>
        <location evidence="1">Cytoplasm</location>
    </subcellularLocation>
</comment>
<comment type="similarity">
    <text evidence="1">Belongs to the AccD/PCCB family.</text>
</comment>
<keyword id="KW-0067">ATP-binding</keyword>
<keyword id="KW-0963">Cytoplasm</keyword>
<keyword id="KW-0275">Fatty acid biosynthesis</keyword>
<keyword id="KW-0276">Fatty acid metabolism</keyword>
<keyword id="KW-0444">Lipid biosynthesis</keyword>
<keyword id="KW-0443">Lipid metabolism</keyword>
<keyword id="KW-0547">Nucleotide-binding</keyword>
<keyword id="KW-0808">Transferase</keyword>
<proteinExistence type="inferred from homology"/>
<reference key="1">
    <citation type="journal article" date="2004" name="Proc. Natl. Acad. Sci. U.S.A.">
        <title>The louse-borne human pathogen Bartonella quintana is a genomic derivative of the zoonotic agent Bartonella henselae.</title>
        <authorList>
            <person name="Alsmark U.C.M."/>
            <person name="Frank A.C."/>
            <person name="Karlberg E.O."/>
            <person name="Legault B.-A."/>
            <person name="Ardell D.H."/>
            <person name="Canbaeck B."/>
            <person name="Eriksson A.-S."/>
            <person name="Naeslund A.K."/>
            <person name="Handley S.A."/>
            <person name="Huvet M."/>
            <person name="La Scola B."/>
            <person name="Holmberg M."/>
            <person name="Andersson S.G.E."/>
        </authorList>
    </citation>
    <scope>NUCLEOTIDE SEQUENCE [LARGE SCALE GENOMIC DNA]</scope>
    <source>
        <strain>ATCC 49882 / DSM 28221 / CCUG 30454 / Houston 1</strain>
    </source>
</reference>
<feature type="chain" id="PRO_0000389692" description="Acetyl-coenzyme A carboxylase carboxyl transferase subunit beta">
    <location>
        <begin position="1"/>
        <end position="306"/>
    </location>
</feature>
<feature type="domain" description="CoA carboxyltransferase N-terminal" evidence="2">
    <location>
        <begin position="25"/>
        <end position="294"/>
    </location>
</feature>
<feature type="region of interest" description="Disordered" evidence="3">
    <location>
        <begin position="287"/>
        <end position="306"/>
    </location>
</feature>
<feature type="compositionally biased region" description="Low complexity" evidence="3">
    <location>
        <begin position="287"/>
        <end position="296"/>
    </location>
</feature>
<accession>Q6G581</accession>
<organism>
    <name type="scientific">Bartonella henselae (strain ATCC 49882 / DSM 28221 / CCUG 30454 / Houston 1)</name>
    <name type="common">Rochalimaea henselae</name>
    <dbReference type="NCBI Taxonomy" id="283166"/>
    <lineage>
        <taxon>Bacteria</taxon>
        <taxon>Pseudomonadati</taxon>
        <taxon>Pseudomonadota</taxon>
        <taxon>Alphaproteobacteria</taxon>
        <taxon>Hyphomicrobiales</taxon>
        <taxon>Bartonellaceae</taxon>
        <taxon>Bartonella</taxon>
    </lineage>
</organism>
<gene>
    <name evidence="1" type="primary">accD</name>
    <name type="ordered locus">BH00340</name>
</gene>
<dbReference type="EC" id="2.1.3.15" evidence="1"/>
<dbReference type="EMBL" id="BX897699">
    <property type="protein sequence ID" value="CAF26850.1"/>
    <property type="molecule type" value="Genomic_DNA"/>
</dbReference>
<dbReference type="RefSeq" id="WP_011180001.1">
    <property type="nucleotide sequence ID" value="NZ_LRIJ02000001.1"/>
</dbReference>
<dbReference type="SMR" id="Q6G581"/>
<dbReference type="PaxDb" id="283166-BH00340"/>
<dbReference type="EnsemblBacteria" id="CAF26850">
    <property type="protein sequence ID" value="CAF26850"/>
    <property type="gene ID" value="BH00340"/>
</dbReference>
<dbReference type="GeneID" id="92986323"/>
<dbReference type="KEGG" id="bhe:BH00340"/>
<dbReference type="eggNOG" id="COG0777">
    <property type="taxonomic scope" value="Bacteria"/>
</dbReference>
<dbReference type="OrthoDB" id="9772975at2"/>
<dbReference type="UniPathway" id="UPA00655">
    <property type="reaction ID" value="UER00711"/>
</dbReference>
<dbReference type="Proteomes" id="UP000000421">
    <property type="component" value="Chromosome"/>
</dbReference>
<dbReference type="GO" id="GO:0009329">
    <property type="term" value="C:acetate CoA-transferase complex"/>
    <property type="evidence" value="ECO:0007669"/>
    <property type="project" value="TreeGrafter"/>
</dbReference>
<dbReference type="GO" id="GO:0003989">
    <property type="term" value="F:acetyl-CoA carboxylase activity"/>
    <property type="evidence" value="ECO:0007669"/>
    <property type="project" value="InterPro"/>
</dbReference>
<dbReference type="GO" id="GO:0005524">
    <property type="term" value="F:ATP binding"/>
    <property type="evidence" value="ECO:0007669"/>
    <property type="project" value="UniProtKB-KW"/>
</dbReference>
<dbReference type="GO" id="GO:0016743">
    <property type="term" value="F:carboxyl- or carbamoyltransferase activity"/>
    <property type="evidence" value="ECO:0007669"/>
    <property type="project" value="UniProtKB-UniRule"/>
</dbReference>
<dbReference type="GO" id="GO:0006633">
    <property type="term" value="P:fatty acid biosynthetic process"/>
    <property type="evidence" value="ECO:0007669"/>
    <property type="project" value="UniProtKB-KW"/>
</dbReference>
<dbReference type="GO" id="GO:2001295">
    <property type="term" value="P:malonyl-CoA biosynthetic process"/>
    <property type="evidence" value="ECO:0007669"/>
    <property type="project" value="UniProtKB-UniRule"/>
</dbReference>
<dbReference type="Gene3D" id="3.90.226.10">
    <property type="entry name" value="2-enoyl-CoA Hydratase, Chain A, domain 1"/>
    <property type="match status" value="1"/>
</dbReference>
<dbReference type="HAMAP" id="MF_01395">
    <property type="entry name" value="AcetylCoA_CT_beta"/>
    <property type="match status" value="1"/>
</dbReference>
<dbReference type="InterPro" id="IPR034733">
    <property type="entry name" value="AcCoA_carboxyl_beta"/>
</dbReference>
<dbReference type="InterPro" id="IPR000438">
    <property type="entry name" value="Acetyl_CoA_COase_Trfase_b_su"/>
</dbReference>
<dbReference type="InterPro" id="IPR029045">
    <property type="entry name" value="ClpP/crotonase-like_dom_sf"/>
</dbReference>
<dbReference type="InterPro" id="IPR011762">
    <property type="entry name" value="COA_CT_N"/>
</dbReference>
<dbReference type="NCBIfam" id="TIGR00515">
    <property type="entry name" value="accD"/>
    <property type="match status" value="1"/>
</dbReference>
<dbReference type="PANTHER" id="PTHR42995">
    <property type="entry name" value="ACETYL-COENZYME A CARBOXYLASE CARBOXYL TRANSFERASE SUBUNIT BETA, CHLOROPLASTIC"/>
    <property type="match status" value="1"/>
</dbReference>
<dbReference type="PANTHER" id="PTHR42995:SF5">
    <property type="entry name" value="ACETYL-COENZYME A CARBOXYLASE CARBOXYL TRANSFERASE SUBUNIT BETA, CHLOROPLASTIC"/>
    <property type="match status" value="1"/>
</dbReference>
<dbReference type="Pfam" id="PF01039">
    <property type="entry name" value="Carboxyl_trans"/>
    <property type="match status" value="1"/>
</dbReference>
<dbReference type="PRINTS" id="PR01070">
    <property type="entry name" value="ACCCTRFRASEB"/>
</dbReference>
<dbReference type="SUPFAM" id="SSF52096">
    <property type="entry name" value="ClpP/crotonase"/>
    <property type="match status" value="1"/>
</dbReference>
<dbReference type="PROSITE" id="PS50980">
    <property type="entry name" value="COA_CT_NTER"/>
    <property type="match status" value="1"/>
</dbReference>